<protein>
    <recommendedName>
        <fullName evidence="1">Small ribosomal subunit protein eS28</fullName>
    </recommendedName>
    <alternativeName>
        <fullName evidence="2">30S ribosomal protein S28e</fullName>
    </alternativeName>
</protein>
<gene>
    <name evidence="1" type="primary">rps28e</name>
    <name type="ordered locus">MmarC5_0964</name>
</gene>
<dbReference type="EMBL" id="CP000609">
    <property type="protein sequence ID" value="ABO35270.1"/>
    <property type="molecule type" value="Genomic_DNA"/>
</dbReference>
<dbReference type="RefSeq" id="WP_011868724.1">
    <property type="nucleotide sequence ID" value="NC_009135.1"/>
</dbReference>
<dbReference type="SMR" id="A4FYI6"/>
<dbReference type="STRING" id="402880.MmarC5_0964"/>
<dbReference type="GeneID" id="4928549"/>
<dbReference type="KEGG" id="mmq:MmarC5_0964"/>
<dbReference type="eggNOG" id="arCOG04314">
    <property type="taxonomic scope" value="Archaea"/>
</dbReference>
<dbReference type="HOGENOM" id="CLU_178987_2_1_2"/>
<dbReference type="OrthoDB" id="7620at2157"/>
<dbReference type="Proteomes" id="UP000000253">
    <property type="component" value="Chromosome"/>
</dbReference>
<dbReference type="GO" id="GO:0022627">
    <property type="term" value="C:cytosolic small ribosomal subunit"/>
    <property type="evidence" value="ECO:0007669"/>
    <property type="project" value="TreeGrafter"/>
</dbReference>
<dbReference type="GO" id="GO:0003735">
    <property type="term" value="F:structural constituent of ribosome"/>
    <property type="evidence" value="ECO:0007669"/>
    <property type="project" value="InterPro"/>
</dbReference>
<dbReference type="GO" id="GO:0030490">
    <property type="term" value="P:maturation of SSU-rRNA"/>
    <property type="evidence" value="ECO:0007669"/>
    <property type="project" value="TreeGrafter"/>
</dbReference>
<dbReference type="GO" id="GO:0000028">
    <property type="term" value="P:ribosomal small subunit assembly"/>
    <property type="evidence" value="ECO:0007669"/>
    <property type="project" value="TreeGrafter"/>
</dbReference>
<dbReference type="GO" id="GO:0006412">
    <property type="term" value="P:translation"/>
    <property type="evidence" value="ECO:0007669"/>
    <property type="project" value="UniProtKB-UniRule"/>
</dbReference>
<dbReference type="CDD" id="cd04457">
    <property type="entry name" value="S1_S28E"/>
    <property type="match status" value="1"/>
</dbReference>
<dbReference type="FunFam" id="2.40.50.140:FF:000145">
    <property type="entry name" value="30S ribosomal protein S28e"/>
    <property type="match status" value="1"/>
</dbReference>
<dbReference type="Gene3D" id="2.40.50.140">
    <property type="entry name" value="Nucleic acid-binding proteins"/>
    <property type="match status" value="1"/>
</dbReference>
<dbReference type="HAMAP" id="MF_00292">
    <property type="entry name" value="Ribosomal_eS28"/>
    <property type="match status" value="1"/>
</dbReference>
<dbReference type="InterPro" id="IPR012340">
    <property type="entry name" value="NA-bd_OB-fold"/>
</dbReference>
<dbReference type="InterPro" id="IPR000289">
    <property type="entry name" value="Ribosomal_eS28"/>
</dbReference>
<dbReference type="InterPro" id="IPR028626">
    <property type="entry name" value="Ribosomal_eS28_CS"/>
</dbReference>
<dbReference type="NCBIfam" id="NF003080">
    <property type="entry name" value="PRK04007.1"/>
    <property type="match status" value="1"/>
</dbReference>
<dbReference type="PANTHER" id="PTHR10769">
    <property type="entry name" value="40S RIBOSOMAL PROTEIN S28"/>
    <property type="match status" value="1"/>
</dbReference>
<dbReference type="PANTHER" id="PTHR10769:SF3">
    <property type="entry name" value="SMALL RIBOSOMAL SUBUNIT PROTEIN ES28"/>
    <property type="match status" value="1"/>
</dbReference>
<dbReference type="Pfam" id="PF01200">
    <property type="entry name" value="Ribosomal_S28e"/>
    <property type="match status" value="1"/>
</dbReference>
<dbReference type="SUPFAM" id="SSF50249">
    <property type="entry name" value="Nucleic acid-binding proteins"/>
    <property type="match status" value="1"/>
</dbReference>
<dbReference type="PROSITE" id="PS00961">
    <property type="entry name" value="RIBOSOMAL_S28E"/>
    <property type="match status" value="1"/>
</dbReference>
<comment type="similarity">
    <text evidence="1">Belongs to the eukaryotic ribosomal protein eS28 family.</text>
</comment>
<sequence length="76" mass="8471">MADDMVYQEAVAAEVIQINGRTGVTGEIFQVRCKILGGKDTGRILTRNVKGPVKLGDLIMLRETEREAKQLGKRRK</sequence>
<reference key="1">
    <citation type="submission" date="2007-03" db="EMBL/GenBank/DDBJ databases">
        <title>Complete sequence of chromosome of Methanococcus maripaludis C5.</title>
        <authorList>
            <consortium name="US DOE Joint Genome Institute"/>
            <person name="Copeland A."/>
            <person name="Lucas S."/>
            <person name="Lapidus A."/>
            <person name="Barry K."/>
            <person name="Glavina del Rio T."/>
            <person name="Dalin E."/>
            <person name="Tice H."/>
            <person name="Pitluck S."/>
            <person name="Chertkov O."/>
            <person name="Brettin T."/>
            <person name="Bruce D."/>
            <person name="Han C."/>
            <person name="Detter J.C."/>
            <person name="Schmutz J."/>
            <person name="Larimer F."/>
            <person name="Land M."/>
            <person name="Hauser L."/>
            <person name="Kyrpides N."/>
            <person name="Mikhailova N."/>
            <person name="Sieprawska-Lupa M."/>
            <person name="Whitman W.B."/>
            <person name="Richardson P."/>
        </authorList>
    </citation>
    <scope>NUCLEOTIDE SEQUENCE [LARGE SCALE GENOMIC DNA]</scope>
    <source>
        <strain>C5 / ATCC BAA-1333</strain>
    </source>
</reference>
<evidence type="ECO:0000255" key="1">
    <source>
        <dbReference type="HAMAP-Rule" id="MF_00292"/>
    </source>
</evidence>
<evidence type="ECO:0000305" key="2"/>
<feature type="chain" id="PRO_1000004121" description="Small ribosomal subunit protein eS28">
    <location>
        <begin position="1"/>
        <end position="76"/>
    </location>
</feature>
<accession>A4FYI6</accession>
<proteinExistence type="inferred from homology"/>
<organism>
    <name type="scientific">Methanococcus maripaludis (strain C5 / ATCC BAA-1333)</name>
    <dbReference type="NCBI Taxonomy" id="402880"/>
    <lineage>
        <taxon>Archaea</taxon>
        <taxon>Methanobacteriati</taxon>
        <taxon>Methanobacteriota</taxon>
        <taxon>Methanomada group</taxon>
        <taxon>Methanococci</taxon>
        <taxon>Methanococcales</taxon>
        <taxon>Methanococcaceae</taxon>
        <taxon>Methanococcus</taxon>
    </lineage>
</organism>
<name>RS28_METM5</name>
<keyword id="KW-0687">Ribonucleoprotein</keyword>
<keyword id="KW-0689">Ribosomal protein</keyword>